<name>ZC21A_CAEEL</name>
<proteinExistence type="inferred from homology"/>
<keyword id="KW-0479">Metal-binding</keyword>
<keyword id="KW-1185">Reference proteome</keyword>
<keyword id="KW-0677">Repeat</keyword>
<keyword id="KW-0862">Zinc</keyword>
<keyword id="KW-0863">Zinc-finger</keyword>
<feature type="chain" id="PRO_0000280255" description="Zinc finger C2HC domain-containing protein zchc-1A">
    <location>
        <begin position="1"/>
        <end position="322"/>
    </location>
</feature>
<feature type="zinc finger region" description="C2HC/C3H-type 1" evidence="1">
    <location>
        <begin position="9"/>
        <end position="38"/>
    </location>
</feature>
<feature type="zinc finger region" description="C2HC/C3H-type 2" evidence="1">
    <location>
        <begin position="119"/>
        <end position="148"/>
    </location>
</feature>
<feature type="region of interest" description="Disordered" evidence="2">
    <location>
        <begin position="150"/>
        <end position="322"/>
    </location>
</feature>
<feature type="compositionally biased region" description="Polar residues" evidence="2">
    <location>
        <begin position="150"/>
        <end position="159"/>
    </location>
</feature>
<feature type="compositionally biased region" description="Basic and acidic residues" evidence="2">
    <location>
        <begin position="174"/>
        <end position="220"/>
    </location>
</feature>
<feature type="compositionally biased region" description="Polar residues" evidence="2">
    <location>
        <begin position="221"/>
        <end position="238"/>
    </location>
</feature>
<feature type="compositionally biased region" description="Polar residues" evidence="2">
    <location>
        <begin position="264"/>
        <end position="274"/>
    </location>
</feature>
<feature type="compositionally biased region" description="Low complexity" evidence="2">
    <location>
        <begin position="276"/>
        <end position="295"/>
    </location>
</feature>
<feature type="compositionally biased region" description="Basic and acidic residues" evidence="2">
    <location>
        <begin position="296"/>
        <end position="305"/>
    </location>
</feature>
<feature type="compositionally biased region" description="Low complexity" evidence="2">
    <location>
        <begin position="311"/>
        <end position="322"/>
    </location>
</feature>
<feature type="binding site" evidence="1">
    <location>
        <position position="13"/>
    </location>
    <ligand>
        <name>Zn(2+)</name>
        <dbReference type="ChEBI" id="CHEBI:29105"/>
        <label>1</label>
    </ligand>
</feature>
<feature type="binding site" evidence="1">
    <location>
        <position position="16"/>
    </location>
    <ligand>
        <name>Zn(2+)</name>
        <dbReference type="ChEBI" id="CHEBI:29105"/>
        <label>1</label>
    </ligand>
</feature>
<feature type="binding site" evidence="1">
    <location>
        <position position="28"/>
    </location>
    <ligand>
        <name>Zn(2+)</name>
        <dbReference type="ChEBI" id="CHEBI:29105"/>
        <label>1</label>
    </ligand>
</feature>
<feature type="binding site" evidence="1">
    <location>
        <position position="32"/>
    </location>
    <ligand>
        <name>Zn(2+)</name>
        <dbReference type="ChEBI" id="CHEBI:29105"/>
        <label>1</label>
    </ligand>
</feature>
<feature type="binding site" evidence="1">
    <location>
        <position position="123"/>
    </location>
    <ligand>
        <name>Zn(2+)</name>
        <dbReference type="ChEBI" id="CHEBI:29105"/>
        <label>2</label>
    </ligand>
</feature>
<feature type="binding site" evidence="1">
    <location>
        <position position="126"/>
    </location>
    <ligand>
        <name>Zn(2+)</name>
        <dbReference type="ChEBI" id="CHEBI:29105"/>
        <label>2</label>
    </ligand>
</feature>
<feature type="binding site" evidence="1">
    <location>
        <position position="138"/>
    </location>
    <ligand>
        <name>Zn(2+)</name>
        <dbReference type="ChEBI" id="CHEBI:29105"/>
        <label>2</label>
    </ligand>
</feature>
<feature type="binding site" evidence="1">
    <location>
        <position position="142"/>
    </location>
    <ligand>
        <name>Zn(2+)</name>
        <dbReference type="ChEBI" id="CHEBI:29105"/>
        <label>2</label>
    </ligand>
</feature>
<sequence>MDSADPNEPTFPCPICDRRFIKSSLEKHESACRKLASLHRKPFDSGKQRASGSDLTYADIKKVQHEKNKNGGVFPRPQTNWRERHGNFIDAVSSSKRVDYALKTGAPLPPPPKTAVPSDYVQCEYCSRNFNAAAAERHIPFCREQATRKQGGNLKSSGGNRALTGNYRSTPSKNEGKKQESSSRNGSAERKPTTRGRDGSLLRARRDDSNDITSRRKSLDTRTSLTTGQASNRHTSLSAGMRPTLPPMTPSSKRSSSAKRDAPLQQSSTPQQRLKTPASTTTTASRSGSRTSSRACPRDDSRDSRLSQAKNNSRNNSRSRIF</sequence>
<gene>
    <name evidence="4" type="primary">zchc-1A</name>
    <name evidence="4" type="ORF">T03G11.3</name>
</gene>
<accession>Q22122</accession>
<protein>
    <recommendedName>
        <fullName evidence="3">Zinc finger C2HC domain-containing protein zchc-1A</fullName>
    </recommendedName>
</protein>
<reference key="1">
    <citation type="journal article" date="1998" name="Science">
        <title>Genome sequence of the nematode C. elegans: a platform for investigating biology.</title>
        <authorList>
            <consortium name="The C. elegans sequencing consortium"/>
        </authorList>
    </citation>
    <scope>NUCLEOTIDE SEQUENCE [LARGE SCALE GENOMIC DNA]</scope>
    <source>
        <strain>Bristol N2</strain>
    </source>
</reference>
<organism>
    <name type="scientific">Caenorhabditis elegans</name>
    <dbReference type="NCBI Taxonomy" id="6239"/>
    <lineage>
        <taxon>Eukaryota</taxon>
        <taxon>Metazoa</taxon>
        <taxon>Ecdysozoa</taxon>
        <taxon>Nematoda</taxon>
        <taxon>Chromadorea</taxon>
        <taxon>Rhabditida</taxon>
        <taxon>Rhabditina</taxon>
        <taxon>Rhabditomorpha</taxon>
        <taxon>Rhabditoidea</taxon>
        <taxon>Rhabditidae</taxon>
        <taxon>Peloderinae</taxon>
        <taxon>Caenorhabditis</taxon>
    </lineage>
</organism>
<dbReference type="EMBL" id="FO081049">
    <property type="protein sequence ID" value="CCD68817.1"/>
    <property type="molecule type" value="Genomic_DNA"/>
</dbReference>
<dbReference type="PIR" id="T29922">
    <property type="entry name" value="T29922"/>
</dbReference>
<dbReference type="BioGRID" id="52706">
    <property type="interactions" value="1"/>
</dbReference>
<dbReference type="FunCoup" id="Q22122">
    <property type="interactions" value="1069"/>
</dbReference>
<dbReference type="STRING" id="6239.T03G11.3.1"/>
<dbReference type="PaxDb" id="6239-T03G11.3"/>
<dbReference type="PeptideAtlas" id="Q22122"/>
<dbReference type="EnsemblMetazoa" id="T03G11.3.1">
    <property type="protein sequence ID" value="T03G11.3.1"/>
    <property type="gene ID" value="WBGene00020196"/>
</dbReference>
<dbReference type="KEGG" id="cel:CELE_T03G11.3"/>
<dbReference type="UCSC" id="T03G11.3">
    <property type="organism name" value="c. elegans"/>
</dbReference>
<dbReference type="AGR" id="WB:WBGene00020196"/>
<dbReference type="CTD" id="188032"/>
<dbReference type="WormBase" id="T03G11.3">
    <property type="protein sequence ID" value="CE42832"/>
    <property type="gene ID" value="WBGene00020196"/>
    <property type="gene designation" value="zchc-1A"/>
</dbReference>
<dbReference type="eggNOG" id="KOG3940">
    <property type="taxonomic scope" value="Eukaryota"/>
</dbReference>
<dbReference type="GeneTree" id="ENSGT00940000161511"/>
<dbReference type="HOGENOM" id="CLU_074438_0_0_1"/>
<dbReference type="InParanoid" id="Q22122"/>
<dbReference type="OMA" id="NWRERHG"/>
<dbReference type="OrthoDB" id="10255185at2759"/>
<dbReference type="PhylomeDB" id="Q22122"/>
<dbReference type="PRO" id="PR:Q22122"/>
<dbReference type="Proteomes" id="UP000001940">
    <property type="component" value="Chromosome X"/>
</dbReference>
<dbReference type="Bgee" id="WBGene00020196">
    <property type="expression patterns" value="Expressed in pharyngeal muscle cell (C elegans) and 3 other cell types or tissues"/>
</dbReference>
<dbReference type="GO" id="GO:0008270">
    <property type="term" value="F:zinc ion binding"/>
    <property type="evidence" value="ECO:0007669"/>
    <property type="project" value="UniProtKB-KW"/>
</dbReference>
<dbReference type="Gene3D" id="3.30.160.60">
    <property type="entry name" value="Classic Zinc Finger"/>
    <property type="match status" value="1"/>
</dbReference>
<dbReference type="InterPro" id="IPR026319">
    <property type="entry name" value="ZC2HC1A/B-like"/>
</dbReference>
<dbReference type="InterPro" id="IPR049899">
    <property type="entry name" value="Znf_C2HC_C3H"/>
</dbReference>
<dbReference type="PANTHER" id="PTHR13555">
    <property type="entry name" value="C2H2 ZINC FINGER CGI-62-RELATED"/>
    <property type="match status" value="1"/>
</dbReference>
<dbReference type="PANTHER" id="PTHR13555:SF25">
    <property type="entry name" value="ZINC FINGER C2HC DOMAIN-CONTAINING PROTEIN 1A"/>
    <property type="match status" value="1"/>
</dbReference>
<dbReference type="Pfam" id="PF13913">
    <property type="entry name" value="zf-C2HC_2"/>
    <property type="match status" value="2"/>
</dbReference>
<dbReference type="PROSITE" id="PS52027">
    <property type="entry name" value="ZF_C2HC_C3H"/>
    <property type="match status" value="2"/>
</dbReference>
<evidence type="ECO:0000255" key="1">
    <source>
        <dbReference type="PROSITE-ProRule" id="PRU01371"/>
    </source>
</evidence>
<evidence type="ECO:0000256" key="2">
    <source>
        <dbReference type="SAM" id="MobiDB-lite"/>
    </source>
</evidence>
<evidence type="ECO:0000305" key="3"/>
<evidence type="ECO:0000312" key="4">
    <source>
        <dbReference type="WormBase" id="T03G11.3"/>
    </source>
</evidence>
<comment type="cofactor">
    <cofactor evidence="1">
        <name>Zn(2+)</name>
        <dbReference type="ChEBI" id="CHEBI:29105"/>
    </cofactor>
</comment>
<comment type="similarity">
    <text evidence="3">Belongs to the ZC2HC1 family.</text>
</comment>